<name>NRAM2_ORYSJ</name>
<gene>
    <name type="primary">NRAMP2</name>
    <name type="ordered locus">Os03g0208500</name>
    <name type="ordered locus">LOC_Os03g11010</name>
    <name type="ORF">OSJNBa0014O06.13</name>
</gene>
<feature type="chain" id="PRO_0000405567" description="Metal transporter Nramp2">
    <location>
        <begin position="1"/>
        <end position="524"/>
    </location>
</feature>
<feature type="transmembrane region" description="Helical" evidence="2">
    <location>
        <begin position="70"/>
        <end position="90"/>
    </location>
</feature>
<feature type="transmembrane region" description="Helical" evidence="2">
    <location>
        <begin position="98"/>
        <end position="118"/>
    </location>
</feature>
<feature type="transmembrane region" description="Helical" evidence="2">
    <location>
        <begin position="155"/>
        <end position="175"/>
    </location>
</feature>
<feature type="transmembrane region" description="Helical" evidence="2">
    <location>
        <begin position="179"/>
        <end position="199"/>
    </location>
</feature>
<feature type="transmembrane region" description="Helical" evidence="2">
    <location>
        <begin position="207"/>
        <end position="227"/>
    </location>
</feature>
<feature type="transmembrane region" description="Helical" evidence="2">
    <location>
        <begin position="253"/>
        <end position="273"/>
    </location>
</feature>
<feature type="transmembrane region" description="Helical" evidence="2">
    <location>
        <begin position="295"/>
        <end position="315"/>
    </location>
</feature>
<feature type="transmembrane region" description="Helical" evidence="2">
    <location>
        <begin position="341"/>
        <end position="361"/>
    </location>
</feature>
<feature type="transmembrane region" description="Helical" evidence="2">
    <location>
        <begin position="389"/>
        <end position="409"/>
    </location>
</feature>
<feature type="transmembrane region" description="Helical" evidence="2">
    <location>
        <begin position="420"/>
        <end position="440"/>
    </location>
</feature>
<feature type="transmembrane region" description="Helical" evidence="2">
    <location>
        <begin position="457"/>
        <end position="477"/>
    </location>
</feature>
<feature type="transmembrane region" description="Helical" evidence="2">
    <location>
        <begin position="486"/>
        <end position="506"/>
    </location>
</feature>
<feature type="region of interest" description="Disordered" evidence="3">
    <location>
        <begin position="34"/>
        <end position="58"/>
    </location>
</feature>
<comment type="function">
    <text evidence="1">Probable metal transporter.</text>
</comment>
<comment type="subcellular location">
    <subcellularLocation>
        <location evidence="4">Membrane</location>
        <topology evidence="4">Multi-pass membrane protein</topology>
    </subcellularLocation>
</comment>
<comment type="similarity">
    <text evidence="4">Belongs to the NRAMP (TC 2.A.55) family.</text>
</comment>
<comment type="sequence caution" evidence="4">
    <conflict type="erroneous gene model prediction">
        <sequence resource="EMBL-CDS" id="AAN77306"/>
    </conflict>
</comment>
<evidence type="ECO:0000250" key="1"/>
<evidence type="ECO:0000255" key="2"/>
<evidence type="ECO:0000256" key="3">
    <source>
        <dbReference type="SAM" id="MobiDB-lite"/>
    </source>
</evidence>
<evidence type="ECO:0000305" key="4"/>
<protein>
    <recommendedName>
        <fullName>Metal transporter Nramp2</fullName>
        <shortName>OsNramp2</shortName>
    </recommendedName>
</protein>
<sequence length="524" mass="56928">MASRDLAESLLPVGGGAATATATATAHDEYDERAYDSDDKVSIAVSDSDSEDGGGGGGDAMRPAFSWRKLWRFTGPGFLMCIAFLDPGNLEGDLQAGAAAGYQLLWLLLWATVMGALVQLLSARLGVATGKHLAELCREEYPPWATRALWAMTELALVGADIQEVIGSAIAIKILSAGTVPLWGGVVITAFDCFIFLFLENYGVRKLEAFFGVLIAVMAVSFAIMFGETKPSGKELLIGLVVPKLSSRTIKQAVGIVGCIIMPHNVFLHSALVQSRKIDTNKKSRVQEAVFYYNIESILALIVSFFINICVTTVFAKGFYGSEQADGIGLENAGQYLQQKYGTAFFPILYIWAIGLLASGQSSTITGTYAGQFVMGGFLNLRLKKWLRAMITRSFAIIPTMIVALFFDTEDPTMDILNEALNVLQSIQIPFALIPLITLVSKEQVMGSFVVGPITKVISWIVTVFLMLINGYLILSFYATEVRGALVRSSLCVVLAVYLAFIVYLIMRNTSLYSRLRSAMTKST</sequence>
<dbReference type="EMBL" id="AC105928">
    <property type="protein sequence ID" value="AAN77306.1"/>
    <property type="status" value="ALT_SEQ"/>
    <property type="molecule type" value="Genomic_DNA"/>
</dbReference>
<dbReference type="EMBL" id="DP000009">
    <property type="protein sequence ID" value="ABF94567.1"/>
    <property type="molecule type" value="Genomic_DNA"/>
</dbReference>
<dbReference type="EMBL" id="AP008209">
    <property type="protein sequence ID" value="BAF11244.1"/>
    <property type="molecule type" value="Genomic_DNA"/>
</dbReference>
<dbReference type="EMBL" id="AP014959">
    <property type="protein sequence ID" value="BAS82886.1"/>
    <property type="molecule type" value="Genomic_DNA"/>
</dbReference>
<dbReference type="EMBL" id="AK065481">
    <property type="protein sequence ID" value="BAG89534.1"/>
    <property type="molecule type" value="mRNA"/>
</dbReference>
<dbReference type="RefSeq" id="XP_015632573.1">
    <property type="nucleotide sequence ID" value="XM_015777087.1"/>
</dbReference>
<dbReference type="SMR" id="Q10Q65"/>
<dbReference type="FunCoup" id="Q10Q65">
    <property type="interactions" value="901"/>
</dbReference>
<dbReference type="STRING" id="39947.Q10Q65"/>
<dbReference type="PaxDb" id="39947-Q10Q65"/>
<dbReference type="EnsemblPlants" id="Os03t0208500-01">
    <property type="protein sequence ID" value="Os03t0208500-01"/>
    <property type="gene ID" value="Os03g0208500"/>
</dbReference>
<dbReference type="Gramene" id="Os03t0208500-01">
    <property type="protein sequence ID" value="Os03t0208500-01"/>
    <property type="gene ID" value="Os03g0208500"/>
</dbReference>
<dbReference type="KEGG" id="dosa:Os03g0208500"/>
<dbReference type="eggNOG" id="KOG1291">
    <property type="taxonomic scope" value="Eukaryota"/>
</dbReference>
<dbReference type="HOGENOM" id="CLU_020088_5_1_1"/>
<dbReference type="InParanoid" id="Q10Q65"/>
<dbReference type="OMA" id="PRWLNYF"/>
<dbReference type="OrthoDB" id="409173at2759"/>
<dbReference type="Proteomes" id="UP000000763">
    <property type="component" value="Chromosome 3"/>
</dbReference>
<dbReference type="Proteomes" id="UP000059680">
    <property type="component" value="Chromosome 3"/>
</dbReference>
<dbReference type="ExpressionAtlas" id="Q10Q65">
    <property type="expression patterns" value="baseline and differential"/>
</dbReference>
<dbReference type="GO" id="GO:0016020">
    <property type="term" value="C:membrane"/>
    <property type="evidence" value="ECO:0007669"/>
    <property type="project" value="UniProtKB-SubCell"/>
</dbReference>
<dbReference type="GO" id="GO:0015086">
    <property type="term" value="F:cadmium ion transmembrane transporter activity"/>
    <property type="evidence" value="ECO:0000318"/>
    <property type="project" value="GO_Central"/>
</dbReference>
<dbReference type="GO" id="GO:0005384">
    <property type="term" value="F:manganese ion transmembrane transporter activity"/>
    <property type="evidence" value="ECO:0000318"/>
    <property type="project" value="GO_Central"/>
</dbReference>
<dbReference type="GO" id="GO:0034755">
    <property type="term" value="P:iron ion transmembrane transport"/>
    <property type="evidence" value="ECO:0000318"/>
    <property type="project" value="GO_Central"/>
</dbReference>
<dbReference type="GO" id="GO:0006828">
    <property type="term" value="P:manganese ion transport"/>
    <property type="evidence" value="ECO:0000318"/>
    <property type="project" value="GO_Central"/>
</dbReference>
<dbReference type="HAMAP" id="MF_00221">
    <property type="entry name" value="NRAMP"/>
    <property type="match status" value="1"/>
</dbReference>
<dbReference type="InterPro" id="IPR001046">
    <property type="entry name" value="NRAMP_fam"/>
</dbReference>
<dbReference type="NCBIfam" id="TIGR01197">
    <property type="entry name" value="nramp"/>
    <property type="match status" value="1"/>
</dbReference>
<dbReference type="NCBIfam" id="NF037982">
    <property type="entry name" value="Nramp_1"/>
    <property type="match status" value="1"/>
</dbReference>
<dbReference type="PANTHER" id="PTHR11706:SF33">
    <property type="entry name" value="NATURAL RESISTANCE-ASSOCIATED MACROPHAGE PROTEIN 2"/>
    <property type="match status" value="1"/>
</dbReference>
<dbReference type="PANTHER" id="PTHR11706">
    <property type="entry name" value="SOLUTE CARRIER PROTEIN FAMILY 11 MEMBER"/>
    <property type="match status" value="1"/>
</dbReference>
<dbReference type="Pfam" id="PF01566">
    <property type="entry name" value="Nramp"/>
    <property type="match status" value="1"/>
</dbReference>
<dbReference type="PRINTS" id="PR00447">
    <property type="entry name" value="NATRESASSCMP"/>
</dbReference>
<organism>
    <name type="scientific">Oryza sativa subsp. japonica</name>
    <name type="common">Rice</name>
    <dbReference type="NCBI Taxonomy" id="39947"/>
    <lineage>
        <taxon>Eukaryota</taxon>
        <taxon>Viridiplantae</taxon>
        <taxon>Streptophyta</taxon>
        <taxon>Embryophyta</taxon>
        <taxon>Tracheophyta</taxon>
        <taxon>Spermatophyta</taxon>
        <taxon>Magnoliopsida</taxon>
        <taxon>Liliopsida</taxon>
        <taxon>Poales</taxon>
        <taxon>Poaceae</taxon>
        <taxon>BOP clade</taxon>
        <taxon>Oryzoideae</taxon>
        <taxon>Oryzeae</taxon>
        <taxon>Oryzinae</taxon>
        <taxon>Oryza</taxon>
        <taxon>Oryza sativa</taxon>
    </lineage>
</organism>
<reference key="1">
    <citation type="journal article" date="2005" name="Genome Res.">
        <title>Sequence, annotation, and analysis of synteny between rice chromosome 3 and diverged grass species.</title>
        <authorList>
            <consortium name="The rice chromosome 3 sequencing consortium"/>
            <person name="Buell C.R."/>
            <person name="Yuan Q."/>
            <person name="Ouyang S."/>
            <person name="Liu J."/>
            <person name="Zhu W."/>
            <person name="Wang A."/>
            <person name="Maiti R."/>
            <person name="Haas B."/>
            <person name="Wortman J."/>
            <person name="Pertea M."/>
            <person name="Jones K.M."/>
            <person name="Kim M."/>
            <person name="Overton L."/>
            <person name="Tsitrin T."/>
            <person name="Fadrosh D."/>
            <person name="Bera J."/>
            <person name="Weaver B."/>
            <person name="Jin S."/>
            <person name="Johri S."/>
            <person name="Reardon M."/>
            <person name="Webb K."/>
            <person name="Hill J."/>
            <person name="Moffat K."/>
            <person name="Tallon L."/>
            <person name="Van Aken S."/>
            <person name="Lewis M."/>
            <person name="Utterback T."/>
            <person name="Feldblyum T."/>
            <person name="Zismann V."/>
            <person name="Iobst S."/>
            <person name="Hsiao J."/>
            <person name="de Vazeille A.R."/>
            <person name="Salzberg S.L."/>
            <person name="White O."/>
            <person name="Fraser C.M."/>
            <person name="Yu Y."/>
            <person name="Kim H."/>
            <person name="Rambo T."/>
            <person name="Currie J."/>
            <person name="Collura K."/>
            <person name="Kernodle-Thompson S."/>
            <person name="Wei F."/>
            <person name="Kudrna K."/>
            <person name="Ammiraju J.S.S."/>
            <person name="Luo M."/>
            <person name="Goicoechea J.L."/>
            <person name="Wing R.A."/>
            <person name="Henry D."/>
            <person name="Oates R."/>
            <person name="Palmer M."/>
            <person name="Pries G."/>
            <person name="Saski C."/>
            <person name="Simmons J."/>
            <person name="Soderlund C."/>
            <person name="Nelson W."/>
            <person name="de la Bastide M."/>
            <person name="Spiegel L."/>
            <person name="Nascimento L."/>
            <person name="Huang E."/>
            <person name="Preston R."/>
            <person name="Zutavern T."/>
            <person name="Palmer L."/>
            <person name="O'Shaughnessy A."/>
            <person name="Dike S."/>
            <person name="McCombie W.R."/>
            <person name="Minx P."/>
            <person name="Cordum H."/>
            <person name="Wilson R."/>
            <person name="Jin W."/>
            <person name="Lee H.R."/>
            <person name="Jiang J."/>
            <person name="Jackson S."/>
        </authorList>
    </citation>
    <scope>NUCLEOTIDE SEQUENCE [LARGE SCALE GENOMIC DNA]</scope>
    <source>
        <strain>cv. Nipponbare</strain>
    </source>
</reference>
<reference key="2">
    <citation type="journal article" date="2005" name="Nature">
        <title>The map-based sequence of the rice genome.</title>
        <authorList>
            <consortium name="International rice genome sequencing project (IRGSP)"/>
        </authorList>
    </citation>
    <scope>NUCLEOTIDE SEQUENCE [LARGE SCALE GENOMIC DNA]</scope>
    <source>
        <strain>cv. Nipponbare</strain>
    </source>
</reference>
<reference key="3">
    <citation type="journal article" date="2008" name="Nucleic Acids Res.">
        <title>The rice annotation project database (RAP-DB): 2008 update.</title>
        <authorList>
            <consortium name="The rice annotation project (RAP)"/>
        </authorList>
    </citation>
    <scope>GENOME REANNOTATION</scope>
    <source>
        <strain>cv. Nipponbare</strain>
    </source>
</reference>
<reference key="4">
    <citation type="journal article" date="2013" name="Rice">
        <title>Improvement of the Oryza sativa Nipponbare reference genome using next generation sequence and optical map data.</title>
        <authorList>
            <person name="Kawahara Y."/>
            <person name="de la Bastide M."/>
            <person name="Hamilton J.P."/>
            <person name="Kanamori H."/>
            <person name="McCombie W.R."/>
            <person name="Ouyang S."/>
            <person name="Schwartz D.C."/>
            <person name="Tanaka T."/>
            <person name="Wu J."/>
            <person name="Zhou S."/>
            <person name="Childs K.L."/>
            <person name="Davidson R.M."/>
            <person name="Lin H."/>
            <person name="Quesada-Ocampo L."/>
            <person name="Vaillancourt B."/>
            <person name="Sakai H."/>
            <person name="Lee S.S."/>
            <person name="Kim J."/>
            <person name="Numa H."/>
            <person name="Itoh T."/>
            <person name="Buell C.R."/>
            <person name="Matsumoto T."/>
        </authorList>
    </citation>
    <scope>GENOME REANNOTATION</scope>
    <source>
        <strain>cv. Nipponbare</strain>
    </source>
</reference>
<reference key="5">
    <citation type="journal article" date="2003" name="Science">
        <title>Collection, mapping, and annotation of over 28,000 cDNA clones from japonica rice.</title>
        <authorList>
            <consortium name="The rice full-length cDNA consortium"/>
        </authorList>
    </citation>
    <scope>NUCLEOTIDE SEQUENCE [LARGE SCALE MRNA]</scope>
    <source>
        <strain>cv. Nipponbare</strain>
    </source>
</reference>
<proteinExistence type="evidence at transcript level"/>
<keyword id="KW-0406">Ion transport</keyword>
<keyword id="KW-0408">Iron</keyword>
<keyword id="KW-0410">Iron transport</keyword>
<keyword id="KW-0472">Membrane</keyword>
<keyword id="KW-1185">Reference proteome</keyword>
<keyword id="KW-0812">Transmembrane</keyword>
<keyword id="KW-1133">Transmembrane helix</keyword>
<keyword id="KW-0813">Transport</keyword>
<accession>Q10Q65</accession>
<accession>A0A0P0VUJ2</accession>
<accession>Q8H059</accession>